<reference key="1">
    <citation type="journal article" date="2008" name="PLoS ONE">
        <title>Comparative analysis of Acinetobacters: three genomes for three lifestyles.</title>
        <authorList>
            <person name="Vallenet D."/>
            <person name="Nordmann P."/>
            <person name="Barbe V."/>
            <person name="Poirel L."/>
            <person name="Mangenot S."/>
            <person name="Bataille E."/>
            <person name="Dossat C."/>
            <person name="Gas S."/>
            <person name="Kreimeyer A."/>
            <person name="Lenoble P."/>
            <person name="Oztas S."/>
            <person name="Poulain J."/>
            <person name="Segurens B."/>
            <person name="Robert C."/>
            <person name="Abergel C."/>
            <person name="Claverie J.-M."/>
            <person name="Raoult D."/>
            <person name="Medigue C."/>
            <person name="Weissenbach J."/>
            <person name="Cruveiller S."/>
        </authorList>
    </citation>
    <scope>NUCLEOTIDE SEQUENCE [LARGE SCALE GENOMIC DNA]</scope>
    <source>
        <strain>SDF</strain>
    </source>
</reference>
<feature type="chain" id="PRO_1000192986" description="Phosphoribosylformylglycinamidine cyclo-ligase">
    <location>
        <begin position="1"/>
        <end position="356"/>
    </location>
</feature>
<proteinExistence type="inferred from homology"/>
<comment type="catalytic activity">
    <reaction evidence="1">
        <text>2-formamido-N(1)-(5-O-phospho-beta-D-ribosyl)acetamidine + ATP = 5-amino-1-(5-phospho-beta-D-ribosyl)imidazole + ADP + phosphate + H(+)</text>
        <dbReference type="Rhea" id="RHEA:23032"/>
        <dbReference type="ChEBI" id="CHEBI:15378"/>
        <dbReference type="ChEBI" id="CHEBI:30616"/>
        <dbReference type="ChEBI" id="CHEBI:43474"/>
        <dbReference type="ChEBI" id="CHEBI:137981"/>
        <dbReference type="ChEBI" id="CHEBI:147287"/>
        <dbReference type="ChEBI" id="CHEBI:456216"/>
        <dbReference type="EC" id="6.3.3.1"/>
    </reaction>
</comment>
<comment type="pathway">
    <text evidence="1">Purine metabolism; IMP biosynthesis via de novo pathway; 5-amino-1-(5-phospho-D-ribosyl)imidazole from N(2)-formyl-N(1)-(5-phospho-D-ribosyl)glycinamide: step 2/2.</text>
</comment>
<comment type="subcellular location">
    <subcellularLocation>
        <location evidence="1">Cytoplasm</location>
    </subcellularLocation>
</comment>
<comment type="similarity">
    <text evidence="1">Belongs to the AIR synthase family.</text>
</comment>
<organism>
    <name type="scientific">Acinetobacter baumannii (strain SDF)</name>
    <dbReference type="NCBI Taxonomy" id="509170"/>
    <lineage>
        <taxon>Bacteria</taxon>
        <taxon>Pseudomonadati</taxon>
        <taxon>Pseudomonadota</taxon>
        <taxon>Gammaproteobacteria</taxon>
        <taxon>Moraxellales</taxon>
        <taxon>Moraxellaceae</taxon>
        <taxon>Acinetobacter</taxon>
        <taxon>Acinetobacter calcoaceticus/baumannii complex</taxon>
    </lineage>
</organism>
<name>PUR5_ACIBS</name>
<evidence type="ECO:0000255" key="1">
    <source>
        <dbReference type="HAMAP-Rule" id="MF_00741"/>
    </source>
</evidence>
<keyword id="KW-0067">ATP-binding</keyword>
<keyword id="KW-0963">Cytoplasm</keyword>
<keyword id="KW-0436">Ligase</keyword>
<keyword id="KW-0547">Nucleotide-binding</keyword>
<keyword id="KW-0658">Purine biosynthesis</keyword>
<gene>
    <name evidence="1" type="primary">purM</name>
    <name type="ordered locus">ABSDF0894</name>
</gene>
<accession>B0VT70</accession>
<dbReference type="EC" id="6.3.3.1" evidence="1"/>
<dbReference type="EMBL" id="CU468230">
    <property type="protein sequence ID" value="CAP00257.1"/>
    <property type="molecule type" value="Genomic_DNA"/>
</dbReference>
<dbReference type="SMR" id="B0VT70"/>
<dbReference type="KEGG" id="abm:ABSDF0894"/>
<dbReference type="HOGENOM" id="CLU_047116_0_0_6"/>
<dbReference type="UniPathway" id="UPA00074">
    <property type="reaction ID" value="UER00129"/>
</dbReference>
<dbReference type="Proteomes" id="UP000001741">
    <property type="component" value="Chromosome"/>
</dbReference>
<dbReference type="GO" id="GO:0005829">
    <property type="term" value="C:cytosol"/>
    <property type="evidence" value="ECO:0007669"/>
    <property type="project" value="TreeGrafter"/>
</dbReference>
<dbReference type="GO" id="GO:0005524">
    <property type="term" value="F:ATP binding"/>
    <property type="evidence" value="ECO:0007669"/>
    <property type="project" value="UniProtKB-KW"/>
</dbReference>
<dbReference type="GO" id="GO:0004637">
    <property type="term" value="F:phosphoribosylamine-glycine ligase activity"/>
    <property type="evidence" value="ECO:0007669"/>
    <property type="project" value="TreeGrafter"/>
</dbReference>
<dbReference type="GO" id="GO:0004641">
    <property type="term" value="F:phosphoribosylformylglycinamidine cyclo-ligase activity"/>
    <property type="evidence" value="ECO:0007669"/>
    <property type="project" value="UniProtKB-UniRule"/>
</dbReference>
<dbReference type="GO" id="GO:0006189">
    <property type="term" value="P:'de novo' IMP biosynthetic process"/>
    <property type="evidence" value="ECO:0007669"/>
    <property type="project" value="UniProtKB-UniRule"/>
</dbReference>
<dbReference type="GO" id="GO:0046084">
    <property type="term" value="P:adenine biosynthetic process"/>
    <property type="evidence" value="ECO:0007669"/>
    <property type="project" value="TreeGrafter"/>
</dbReference>
<dbReference type="CDD" id="cd02196">
    <property type="entry name" value="PurM"/>
    <property type="match status" value="1"/>
</dbReference>
<dbReference type="FunFam" id="3.30.1330.10:FF:000001">
    <property type="entry name" value="Phosphoribosylformylglycinamidine cyclo-ligase"/>
    <property type="match status" value="1"/>
</dbReference>
<dbReference type="FunFam" id="3.90.650.10:FF:000001">
    <property type="entry name" value="Phosphoribosylformylglycinamidine cyclo-ligase"/>
    <property type="match status" value="1"/>
</dbReference>
<dbReference type="Gene3D" id="3.90.650.10">
    <property type="entry name" value="PurM-like C-terminal domain"/>
    <property type="match status" value="1"/>
</dbReference>
<dbReference type="Gene3D" id="3.30.1330.10">
    <property type="entry name" value="PurM-like, N-terminal domain"/>
    <property type="match status" value="1"/>
</dbReference>
<dbReference type="HAMAP" id="MF_00741">
    <property type="entry name" value="AIRS"/>
    <property type="match status" value="1"/>
</dbReference>
<dbReference type="InterPro" id="IPR010918">
    <property type="entry name" value="PurM-like_C_dom"/>
</dbReference>
<dbReference type="InterPro" id="IPR036676">
    <property type="entry name" value="PurM-like_C_sf"/>
</dbReference>
<dbReference type="InterPro" id="IPR016188">
    <property type="entry name" value="PurM-like_N"/>
</dbReference>
<dbReference type="InterPro" id="IPR036921">
    <property type="entry name" value="PurM-like_N_sf"/>
</dbReference>
<dbReference type="InterPro" id="IPR004733">
    <property type="entry name" value="PurM_cligase"/>
</dbReference>
<dbReference type="NCBIfam" id="TIGR00878">
    <property type="entry name" value="purM"/>
    <property type="match status" value="1"/>
</dbReference>
<dbReference type="PANTHER" id="PTHR10520:SF12">
    <property type="entry name" value="TRIFUNCTIONAL PURINE BIOSYNTHETIC PROTEIN ADENOSINE-3"/>
    <property type="match status" value="1"/>
</dbReference>
<dbReference type="PANTHER" id="PTHR10520">
    <property type="entry name" value="TRIFUNCTIONAL PURINE BIOSYNTHETIC PROTEIN ADENOSINE-3-RELATED"/>
    <property type="match status" value="1"/>
</dbReference>
<dbReference type="Pfam" id="PF00586">
    <property type="entry name" value="AIRS"/>
    <property type="match status" value="1"/>
</dbReference>
<dbReference type="Pfam" id="PF02769">
    <property type="entry name" value="AIRS_C"/>
    <property type="match status" value="1"/>
</dbReference>
<dbReference type="SUPFAM" id="SSF56042">
    <property type="entry name" value="PurM C-terminal domain-like"/>
    <property type="match status" value="1"/>
</dbReference>
<dbReference type="SUPFAM" id="SSF55326">
    <property type="entry name" value="PurM N-terminal domain-like"/>
    <property type="match status" value="1"/>
</dbReference>
<sequence>MSNSTSTPNTGLSYKDAGVDIEAGDALVDRIKSVAKRTTRPEVMGGLGGFGALCKIPKGYEEPVLVSGTDGVGTKLRLALNLNRHDTIGQDLVAMCVNDLLVCGAEPLFFLDYYATGHLNVDVAANVVTGIGKGCELAGCALVGGETAEMPGMYEGEDYDLAGFAVGVVEQSKIIDGSKVKSGDVLIGVASSGAHSNGYSLLRKILDVKNVDLTQVIDGRPLADVAMEPTRIYVKPVLELCKQVDVHAMAHITGGGLPGNLPRVLPNGAQAVINEASWEWPELFKLLQREGNVERFEMYRTFNCGVGMVIAVDANDAEKAIEVLNAQGEKAWKIGHIQENAESVEGADEKIRVIFE</sequence>
<protein>
    <recommendedName>
        <fullName evidence="1">Phosphoribosylformylglycinamidine cyclo-ligase</fullName>
        <ecNumber evidence="1">6.3.3.1</ecNumber>
    </recommendedName>
    <alternativeName>
        <fullName evidence="1">AIR synthase</fullName>
    </alternativeName>
    <alternativeName>
        <fullName evidence="1">AIRS</fullName>
    </alternativeName>
    <alternativeName>
        <fullName evidence="1">Phosphoribosyl-aminoimidazole synthetase</fullName>
    </alternativeName>
</protein>